<gene>
    <name type="primary">mt:ND3</name>
    <name type="synonym">ND3</name>
</gene>
<name>NU3M_ANOGA</name>
<protein>
    <recommendedName>
        <fullName>NADH-ubiquinone oxidoreductase chain 3</fullName>
        <ecNumber>7.1.1.2</ecNumber>
    </recommendedName>
    <alternativeName>
        <fullName>NADH dehydrogenase subunit 3</fullName>
    </alternativeName>
</protein>
<proteinExistence type="inferred from homology"/>
<evidence type="ECO:0000250" key="1"/>
<evidence type="ECO:0000255" key="2"/>
<evidence type="ECO:0000305" key="3"/>
<accession>P34850</accession>
<comment type="function">
    <text evidence="1">Core subunit of the mitochondrial membrane respiratory chain NADH dehydrogenase (Complex I) that is believed to belong to the minimal assembly required for catalysis. Complex I functions in the transfer of electrons from NADH to the respiratory chain. The immediate electron acceptor for the enzyme is believed to be ubiquinone (By similarity).</text>
</comment>
<comment type="catalytic activity">
    <reaction>
        <text>a ubiquinone + NADH + 5 H(+)(in) = a ubiquinol + NAD(+) + 4 H(+)(out)</text>
        <dbReference type="Rhea" id="RHEA:29091"/>
        <dbReference type="Rhea" id="RHEA-COMP:9565"/>
        <dbReference type="Rhea" id="RHEA-COMP:9566"/>
        <dbReference type="ChEBI" id="CHEBI:15378"/>
        <dbReference type="ChEBI" id="CHEBI:16389"/>
        <dbReference type="ChEBI" id="CHEBI:17976"/>
        <dbReference type="ChEBI" id="CHEBI:57540"/>
        <dbReference type="ChEBI" id="CHEBI:57945"/>
        <dbReference type="EC" id="7.1.1.2"/>
    </reaction>
</comment>
<comment type="subcellular location">
    <subcellularLocation>
        <location evidence="1">Mitochondrion membrane</location>
        <topology evidence="1">Multi-pass membrane protein</topology>
    </subcellularLocation>
</comment>
<comment type="similarity">
    <text evidence="3">Belongs to the complex I subunit 3 family.</text>
</comment>
<geneLocation type="mitochondrion"/>
<feature type="chain" id="PRO_0000117704" description="NADH-ubiquinone oxidoreductase chain 3">
    <location>
        <begin position="1"/>
        <end position="117"/>
    </location>
</feature>
<feature type="transmembrane region" description="Helical" evidence="2">
    <location>
        <begin position="1"/>
        <end position="21"/>
    </location>
</feature>
<feature type="transmembrane region" description="Helical" evidence="2">
    <location>
        <begin position="58"/>
        <end position="78"/>
    </location>
</feature>
<feature type="transmembrane region" description="Helical" evidence="2">
    <location>
        <begin position="86"/>
        <end position="106"/>
    </location>
</feature>
<reference key="1">
    <citation type="journal article" date="1993" name="Insect Mol. Biol.">
        <title>The mitochondrial genome of the mosquito Anopheles gambiae: DNA sequence, genome organization, and comparisons with mitochondrial sequences of other insects.</title>
        <authorList>
            <person name="Beard C.B."/>
            <person name="Hamm D.M."/>
            <person name="Collins F.H."/>
        </authorList>
    </citation>
    <scope>NUCLEOTIDE SEQUENCE [LARGE SCALE GENOMIC DNA]</scope>
    <source>
        <strain>G3</strain>
    </source>
</reference>
<keyword id="KW-0249">Electron transport</keyword>
<keyword id="KW-0472">Membrane</keyword>
<keyword id="KW-0496">Mitochondrion</keyword>
<keyword id="KW-0520">NAD</keyword>
<keyword id="KW-1185">Reference proteome</keyword>
<keyword id="KW-0679">Respiratory chain</keyword>
<keyword id="KW-1278">Translocase</keyword>
<keyword id="KW-0812">Transmembrane</keyword>
<keyword id="KW-1133">Transmembrane helix</keyword>
<keyword id="KW-0813">Transport</keyword>
<keyword id="KW-0830">Ubiquinone</keyword>
<organism>
    <name type="scientific">Anopheles gambiae</name>
    <name type="common">African malaria mosquito</name>
    <dbReference type="NCBI Taxonomy" id="7165"/>
    <lineage>
        <taxon>Eukaryota</taxon>
        <taxon>Metazoa</taxon>
        <taxon>Ecdysozoa</taxon>
        <taxon>Arthropoda</taxon>
        <taxon>Hexapoda</taxon>
        <taxon>Insecta</taxon>
        <taxon>Pterygota</taxon>
        <taxon>Neoptera</taxon>
        <taxon>Endopterygota</taxon>
        <taxon>Diptera</taxon>
        <taxon>Nematocera</taxon>
        <taxon>Culicoidea</taxon>
        <taxon>Culicidae</taxon>
        <taxon>Anophelinae</taxon>
        <taxon>Anopheles</taxon>
    </lineage>
</organism>
<sequence length="117" mass="13630">MLMLSTMTLIIFIITIVVMMLATLLSKKTLLDREKCSPFECGFDPMNSSRLPFSLRFFLIAIIFLIFDVEIALLLPMIMIIKTSNLMNWTITSLFFIFILLIGLYHEWNQGALEWNE</sequence>
<dbReference type="EC" id="7.1.1.2"/>
<dbReference type="EMBL" id="L20934">
    <property type="protein sequence ID" value="AAD12196.1"/>
    <property type="molecule type" value="Genomic_DNA"/>
</dbReference>
<dbReference type="PIR" id="T09806">
    <property type="entry name" value="T09806"/>
</dbReference>
<dbReference type="RefSeq" id="NP_008075.1">
    <property type="nucleotide sequence ID" value="NC_002084.1"/>
</dbReference>
<dbReference type="SMR" id="P34850"/>
<dbReference type="FunCoup" id="P34850">
    <property type="interactions" value="129"/>
</dbReference>
<dbReference type="STRING" id="7165.P34850"/>
<dbReference type="PaxDb" id="7165-AGAP028373-PA"/>
<dbReference type="EnsemblMetazoa" id="AGAP028373-RA">
    <property type="protein sequence ID" value="AGAP028373-PA"/>
    <property type="gene ID" value="AGAP028373"/>
</dbReference>
<dbReference type="VEuPathDB" id="VectorBase:AGAMI1_011544"/>
<dbReference type="VEuPathDB" id="VectorBase:AGAP028373"/>
<dbReference type="eggNOG" id="KOG4662">
    <property type="taxonomic scope" value="Eukaryota"/>
</dbReference>
<dbReference type="HOGENOM" id="CLU_119549_3_1_1"/>
<dbReference type="InParanoid" id="P34850"/>
<dbReference type="OMA" id="GPRRYNR"/>
<dbReference type="Proteomes" id="UP000007062">
    <property type="component" value="Mitochondrion"/>
</dbReference>
<dbReference type="GO" id="GO:0031966">
    <property type="term" value="C:mitochondrial membrane"/>
    <property type="evidence" value="ECO:0007669"/>
    <property type="project" value="UniProtKB-SubCell"/>
</dbReference>
<dbReference type="GO" id="GO:0045271">
    <property type="term" value="C:respiratory chain complex I"/>
    <property type="evidence" value="ECO:0000318"/>
    <property type="project" value="GO_Central"/>
</dbReference>
<dbReference type="GO" id="GO:0008137">
    <property type="term" value="F:NADH dehydrogenase (ubiquinone) activity"/>
    <property type="evidence" value="ECO:0000318"/>
    <property type="project" value="GO_Central"/>
</dbReference>
<dbReference type="FunFam" id="1.20.58.1610:FF:000004">
    <property type="entry name" value="NADH-quinone oxidoreductase subunit A"/>
    <property type="match status" value="1"/>
</dbReference>
<dbReference type="Gene3D" id="1.20.58.1610">
    <property type="entry name" value="NADH:ubiquinone/plastoquinone oxidoreductase, chain 3"/>
    <property type="match status" value="1"/>
</dbReference>
<dbReference type="InterPro" id="IPR000440">
    <property type="entry name" value="NADH_UbQ/plastoQ_OxRdtase_su3"/>
</dbReference>
<dbReference type="InterPro" id="IPR038430">
    <property type="entry name" value="NDAH_ubi_oxred_su3_sf"/>
</dbReference>
<dbReference type="PANTHER" id="PTHR11058">
    <property type="entry name" value="NADH-UBIQUINONE OXIDOREDUCTASE CHAIN 3"/>
    <property type="match status" value="1"/>
</dbReference>
<dbReference type="PANTHER" id="PTHR11058:SF9">
    <property type="entry name" value="NADH-UBIQUINONE OXIDOREDUCTASE CHAIN 3"/>
    <property type="match status" value="1"/>
</dbReference>
<dbReference type="Pfam" id="PF00507">
    <property type="entry name" value="Oxidored_q4"/>
    <property type="match status" value="1"/>
</dbReference>